<sequence length="540" mass="58059">MVFTKEEVDYSLYLVTDSTMLPPGTTLCSQVEAGLKNGVTLVQIREKDIETKNFVAEALEVQKICKKYNVPLIINDRIDVAMAIDADGVHVGQDDMPIPMVRKLLGPSKILGWSVGKPSEVETLAKWGPDMVDYIGVGTLFPTSTKKNPKKSPMGPQGAIAILDALEEFKATWCRTVGIGGLHPDNIQRVLCQCVASNGKRSLDGISLVSDIMAAPDACAATKRLRGLLDATRYQFVECELNNTFPTTTSIQNVISQVSNNRPLVQHITNKVHQNFGANVTLALGSSPIMSEIESEVSELARIPNASLLLNTGSVAPIEMLKAAINAYNEVNRPITFDPVGYSATETRLCLNNTLLTYGQFACIKGNCSEILSLAKLNNHKMKGVDSSSGKTNIDTLVRATQIVAFQYRTVAVCTGEFDCVADGTFGGEYKLSSGTEGITAEDLPCVIIEDGPIPIMGDITASGCSLGSTIASFIGGLDSTGKLFDAVVGAVLLYKSAGKLASTRCQGSGSFHVELIDALYQLFHENKPEKWSASLKKFK</sequence>
<name>THI6_YEAST</name>
<reference key="1">
    <citation type="journal article" date="1994" name="J. Biol. Chem.">
        <title>Isolation and characterization of the THI6 gene encoding a bifunctional thiamin-phosphate pyrophosphorylase/hydroxyethylthiazole kinase from Saccharomyces cerevisiae.</title>
        <authorList>
            <person name="Nosaka K."/>
            <person name="Nishimura H."/>
            <person name="Kawasaki Y."/>
            <person name="Tsujihara T."/>
            <person name="Iwashima A."/>
        </authorList>
    </citation>
    <scope>NUCLEOTIDE SEQUENCE [GENOMIC DNA]</scope>
    <source>
        <strain>ND5-5A</strain>
    </source>
</reference>
<reference key="2">
    <citation type="journal article" date="1997" name="Nature">
        <title>The nucleotide sequence of Saccharomyces cerevisiae chromosome XVI.</title>
        <authorList>
            <person name="Bussey H."/>
            <person name="Storms R.K."/>
            <person name="Ahmed A."/>
            <person name="Albermann K."/>
            <person name="Allen E."/>
            <person name="Ansorge W."/>
            <person name="Araujo R."/>
            <person name="Aparicio A."/>
            <person name="Barrell B.G."/>
            <person name="Badcock K."/>
            <person name="Benes V."/>
            <person name="Botstein D."/>
            <person name="Bowman S."/>
            <person name="Brueckner M."/>
            <person name="Carpenter J."/>
            <person name="Cherry J.M."/>
            <person name="Chung E."/>
            <person name="Churcher C.M."/>
            <person name="Coster F."/>
            <person name="Davis K."/>
            <person name="Davis R.W."/>
            <person name="Dietrich F.S."/>
            <person name="Delius H."/>
            <person name="DiPaolo T."/>
            <person name="Dubois E."/>
            <person name="Duesterhoeft A."/>
            <person name="Duncan M."/>
            <person name="Floeth M."/>
            <person name="Fortin N."/>
            <person name="Friesen J.D."/>
            <person name="Fritz C."/>
            <person name="Goffeau A."/>
            <person name="Hall J."/>
            <person name="Hebling U."/>
            <person name="Heumann K."/>
            <person name="Hilbert H."/>
            <person name="Hillier L.W."/>
            <person name="Hunicke-Smith S."/>
            <person name="Hyman R.W."/>
            <person name="Johnston M."/>
            <person name="Kalman S."/>
            <person name="Kleine K."/>
            <person name="Komp C."/>
            <person name="Kurdi O."/>
            <person name="Lashkari D."/>
            <person name="Lew H."/>
            <person name="Lin A."/>
            <person name="Lin D."/>
            <person name="Louis E.J."/>
            <person name="Marathe R."/>
            <person name="Messenguy F."/>
            <person name="Mewes H.-W."/>
            <person name="Mirtipati S."/>
            <person name="Moestl D."/>
            <person name="Mueller-Auer S."/>
            <person name="Namath A."/>
            <person name="Nentwich U."/>
            <person name="Oefner P."/>
            <person name="Pearson D."/>
            <person name="Petel F.X."/>
            <person name="Pohl T.M."/>
            <person name="Purnelle B."/>
            <person name="Rajandream M.A."/>
            <person name="Rechmann S."/>
            <person name="Rieger M."/>
            <person name="Riles L."/>
            <person name="Roberts D."/>
            <person name="Schaefer M."/>
            <person name="Scharfe M."/>
            <person name="Scherens B."/>
            <person name="Schramm S."/>
            <person name="Schroeder M."/>
            <person name="Sdicu A.-M."/>
            <person name="Tettelin H."/>
            <person name="Urrestarazu L.A."/>
            <person name="Ushinsky S."/>
            <person name="Vierendeels F."/>
            <person name="Vissers S."/>
            <person name="Voss H."/>
            <person name="Walsh S.V."/>
            <person name="Wambutt R."/>
            <person name="Wang Y."/>
            <person name="Wedler E."/>
            <person name="Wedler H."/>
            <person name="Winnett E."/>
            <person name="Zhong W.-W."/>
            <person name="Zollner A."/>
            <person name="Vo D.H."/>
            <person name="Hani J."/>
        </authorList>
    </citation>
    <scope>NUCLEOTIDE SEQUENCE [LARGE SCALE GENOMIC DNA]</scope>
    <source>
        <strain>ATCC 204508 / S288c</strain>
    </source>
</reference>
<reference key="3">
    <citation type="journal article" date="2014" name="G3 (Bethesda)">
        <title>The reference genome sequence of Saccharomyces cerevisiae: Then and now.</title>
        <authorList>
            <person name="Engel S.R."/>
            <person name="Dietrich F.S."/>
            <person name="Fisk D.G."/>
            <person name="Binkley G."/>
            <person name="Balakrishnan R."/>
            <person name="Costanzo M.C."/>
            <person name="Dwight S.S."/>
            <person name="Hitz B.C."/>
            <person name="Karra K."/>
            <person name="Nash R.S."/>
            <person name="Weng S."/>
            <person name="Wong E.D."/>
            <person name="Lloyd P."/>
            <person name="Skrzypek M.S."/>
            <person name="Miyasato S.R."/>
            <person name="Simison M."/>
            <person name="Cherry J.M."/>
        </authorList>
    </citation>
    <scope>GENOME REANNOTATION</scope>
    <source>
        <strain>ATCC 204508 / S288c</strain>
    </source>
</reference>
<proteinExistence type="inferred from homology"/>
<organism>
    <name type="scientific">Saccharomyces cerevisiae (strain ATCC 204508 / S288c)</name>
    <name type="common">Baker's yeast</name>
    <dbReference type="NCBI Taxonomy" id="559292"/>
    <lineage>
        <taxon>Eukaryota</taxon>
        <taxon>Fungi</taxon>
        <taxon>Dikarya</taxon>
        <taxon>Ascomycota</taxon>
        <taxon>Saccharomycotina</taxon>
        <taxon>Saccharomycetes</taxon>
        <taxon>Saccharomycetales</taxon>
        <taxon>Saccharomycetaceae</taxon>
        <taxon>Saccharomyces</taxon>
    </lineage>
</organism>
<evidence type="ECO:0000250" key="1"/>
<evidence type="ECO:0000305" key="2"/>
<accession>P41835</accession>
<accession>D6W3F6</accession>
<feature type="chain" id="PRO_0000157090" description="Thiamine biosynthetic bifunctional enzyme">
    <location>
        <begin position="1"/>
        <end position="540"/>
    </location>
</feature>
<feature type="region of interest" description="Thiamine-phosphate synthase">
    <location>
        <begin position="1"/>
        <end position="238"/>
    </location>
</feature>
<feature type="region of interest" description="Hydroxyethylthiazole kinase">
    <location>
        <begin position="239"/>
        <end position="540"/>
    </location>
</feature>
<feature type="active site" description="Proton acceptor; for hydroxyethylthiazole kinase activity" evidence="1">
    <location>
        <position position="465"/>
    </location>
</feature>
<feature type="binding site" evidence="1">
    <location>
        <begin position="43"/>
        <end position="47"/>
    </location>
    <ligand>
        <name>4-amino-2-methyl-5-(diphosphooxymethyl)pyrimidine</name>
        <dbReference type="ChEBI" id="CHEBI:57841"/>
    </ligand>
</feature>
<feature type="binding site" evidence="1">
    <location>
        <position position="75"/>
    </location>
    <ligand>
        <name>4-amino-2-methyl-5-(diphosphooxymethyl)pyrimidine</name>
        <dbReference type="ChEBI" id="CHEBI:57841"/>
    </ligand>
</feature>
<feature type="binding site" evidence="1">
    <location>
        <position position="76"/>
    </location>
    <ligand>
        <name>Mg(2+)</name>
        <dbReference type="ChEBI" id="CHEBI:18420"/>
    </ligand>
</feature>
<feature type="binding site" evidence="1">
    <location>
        <position position="95"/>
    </location>
    <ligand>
        <name>Mg(2+)</name>
        <dbReference type="ChEBI" id="CHEBI:18420"/>
    </ligand>
</feature>
<feature type="binding site" evidence="1">
    <location>
        <position position="114"/>
    </location>
    <ligand>
        <name>4-amino-2-methyl-5-(diphosphooxymethyl)pyrimidine</name>
        <dbReference type="ChEBI" id="CHEBI:57841"/>
    </ligand>
</feature>
<feature type="binding site" evidence="1">
    <location>
        <begin position="143"/>
        <end position="145"/>
    </location>
    <ligand>
        <name>2-[(2R,5Z)-2-carboxy-4-methylthiazol-5(2H)-ylidene]ethyl phosphate</name>
        <dbReference type="ChEBI" id="CHEBI:62899"/>
    </ligand>
</feature>
<feature type="binding site" evidence="1">
    <location>
        <position position="146"/>
    </location>
    <ligand>
        <name>4-amino-2-methyl-5-(diphosphooxymethyl)pyrimidine</name>
        <dbReference type="ChEBI" id="CHEBI:57841"/>
    </ligand>
</feature>
<feature type="binding site" evidence="1">
    <location>
        <position position="181"/>
    </location>
    <ligand>
        <name>2-[(2R,5Z)-2-carboxy-4-methylthiazol-5(2H)-ylidene]ethyl phosphate</name>
        <dbReference type="ChEBI" id="CHEBI:62899"/>
    </ligand>
</feature>
<feature type="binding site" evidence="1">
    <location>
        <begin position="209"/>
        <end position="210"/>
    </location>
    <ligand>
        <name>2-[(2R,5Z)-2-carboxy-4-methylthiazol-5(2H)-ylidene]ethyl phosphate</name>
        <dbReference type="ChEBI" id="CHEBI:62899"/>
    </ligand>
</feature>
<feature type="binding site" evidence="1">
    <location>
        <position position="290"/>
    </location>
    <ligand>
        <name>5-(2-hydroxyethyl)-4-methylthiazole</name>
        <dbReference type="ChEBI" id="CHEBI:17957"/>
    </ligand>
</feature>
<feature type="binding site" evidence="1">
    <location>
        <position position="365"/>
    </location>
    <ligand>
        <name>ATP</name>
        <dbReference type="ChEBI" id="CHEBI:30616"/>
    </ligand>
</feature>
<feature type="binding site" evidence="1">
    <location>
        <position position="415"/>
    </location>
    <ligand>
        <name>ATP</name>
        <dbReference type="ChEBI" id="CHEBI:30616"/>
    </ligand>
</feature>
<feature type="binding site" evidence="1">
    <location>
        <position position="462"/>
    </location>
    <ligand>
        <name>5-(2-hydroxyethyl)-4-methylthiazole</name>
        <dbReference type="ChEBI" id="CHEBI:17957"/>
    </ligand>
</feature>
<feature type="sequence variant" description="In THI6-3; possesses TMP-PPASE activity only.">
    <original>E</original>
    <variation>K</variation>
    <location>
        <position position="370"/>
    </location>
</feature>
<feature type="sequence variant" description="In THI6-2; both enzyme activities greatly decreased.">
    <original>G</original>
    <variation>D</variation>
    <location>
        <position position="476"/>
    </location>
</feature>
<feature type="sequence variant" description="In THI6-1; both enzyme activities greatly decreased.">
    <original>G</original>
    <variation>D</variation>
    <location>
        <position position="510"/>
    </location>
</feature>
<protein>
    <recommendedName>
        <fullName>Thiamine biosynthetic bifunctional enzyme</fullName>
    </recommendedName>
    <domain>
        <recommendedName>
            <fullName>Thiamine-phosphate synthase</fullName>
            <shortName>TP synthase</shortName>
            <shortName>TPS</shortName>
            <ecNumber>2.5.1.3</ecNumber>
        </recommendedName>
        <alternativeName>
            <fullName>Thiamine-phosphate pyrophosphorylase</fullName>
            <shortName>TMP pyrophosphorylase</shortName>
            <shortName>TMP-PPase</shortName>
        </alternativeName>
    </domain>
    <domain>
        <recommendedName>
            <fullName>Hydroxyethylthiazole kinase</fullName>
            <ecNumber>2.7.1.50</ecNumber>
        </recommendedName>
        <alternativeName>
            <fullName>4-methyl-5-beta-hydroxyethylthiazole kinase</fullName>
            <shortName>TH kinase</shortName>
            <shortName>THZ kinase</shortName>
        </alternativeName>
    </domain>
</protein>
<gene>
    <name type="primary">THI6</name>
    <name type="ordered locus">YPL214C</name>
</gene>
<dbReference type="EC" id="2.5.1.3"/>
<dbReference type="EC" id="2.7.1.50"/>
<dbReference type="EMBL" id="D31908">
    <property type="protein sequence ID" value="BAA06703.1"/>
    <property type="molecule type" value="Genomic_DNA"/>
</dbReference>
<dbReference type="EMBL" id="Z73570">
    <property type="protein sequence ID" value="CAA97929.1"/>
    <property type="molecule type" value="Genomic_DNA"/>
</dbReference>
<dbReference type="EMBL" id="BK006949">
    <property type="protein sequence ID" value="DAA11222.1"/>
    <property type="molecule type" value="Genomic_DNA"/>
</dbReference>
<dbReference type="PIR" id="A55145">
    <property type="entry name" value="A55145"/>
</dbReference>
<dbReference type="RefSeq" id="NP_015110.1">
    <property type="nucleotide sequence ID" value="NM_001184028.1"/>
</dbReference>
<dbReference type="SMR" id="P41835"/>
<dbReference type="BioGRID" id="35971">
    <property type="interactions" value="119"/>
</dbReference>
<dbReference type="DIP" id="DIP-1666N"/>
<dbReference type="FunCoup" id="P41835">
    <property type="interactions" value="172"/>
</dbReference>
<dbReference type="IntAct" id="P41835">
    <property type="interactions" value="2"/>
</dbReference>
<dbReference type="MINT" id="P41835"/>
<dbReference type="STRING" id="4932.YPL214C"/>
<dbReference type="PaxDb" id="4932-YPL214C"/>
<dbReference type="PeptideAtlas" id="P41835"/>
<dbReference type="EnsemblFungi" id="YPL214C_mRNA">
    <property type="protein sequence ID" value="YPL214C"/>
    <property type="gene ID" value="YPL214C"/>
</dbReference>
<dbReference type="GeneID" id="855887"/>
<dbReference type="KEGG" id="sce:YPL214C"/>
<dbReference type="AGR" id="SGD:S000006135"/>
<dbReference type="SGD" id="S000006135">
    <property type="gene designation" value="THI6"/>
</dbReference>
<dbReference type="VEuPathDB" id="FungiDB:YPL214C"/>
<dbReference type="eggNOG" id="ENOG502QS2M">
    <property type="taxonomic scope" value="Eukaryota"/>
</dbReference>
<dbReference type="HOGENOM" id="CLU_019943_1_1_1"/>
<dbReference type="InParanoid" id="P41835"/>
<dbReference type="OMA" id="GQTDMPI"/>
<dbReference type="OrthoDB" id="4994at2759"/>
<dbReference type="BioCyc" id="MetaCyc:YPL214C-MONOMER"/>
<dbReference type="BioCyc" id="YEAST:YPL214C-MONOMER"/>
<dbReference type="UniPathway" id="UPA00060">
    <property type="reaction ID" value="UER00139"/>
</dbReference>
<dbReference type="UniPathway" id="UPA00060">
    <property type="reaction ID" value="UER00141"/>
</dbReference>
<dbReference type="BioGRID-ORCS" id="855887">
    <property type="hits" value="4 hits in 10 CRISPR screens"/>
</dbReference>
<dbReference type="PRO" id="PR:P41835"/>
<dbReference type="Proteomes" id="UP000002311">
    <property type="component" value="Chromosome XVI"/>
</dbReference>
<dbReference type="RNAct" id="P41835">
    <property type="molecule type" value="protein"/>
</dbReference>
<dbReference type="GO" id="GO:0005737">
    <property type="term" value="C:cytoplasm"/>
    <property type="evidence" value="ECO:0007005"/>
    <property type="project" value="SGD"/>
</dbReference>
<dbReference type="GO" id="GO:0005829">
    <property type="term" value="C:cytosol"/>
    <property type="evidence" value="ECO:0000314"/>
    <property type="project" value="SGD"/>
</dbReference>
<dbReference type="GO" id="GO:0005524">
    <property type="term" value="F:ATP binding"/>
    <property type="evidence" value="ECO:0007669"/>
    <property type="project" value="UniProtKB-KW"/>
</dbReference>
<dbReference type="GO" id="GO:0004417">
    <property type="term" value="F:hydroxyethylthiazole kinase activity"/>
    <property type="evidence" value="ECO:0000315"/>
    <property type="project" value="SGD"/>
</dbReference>
<dbReference type="GO" id="GO:0000287">
    <property type="term" value="F:magnesium ion binding"/>
    <property type="evidence" value="ECO:0007669"/>
    <property type="project" value="InterPro"/>
</dbReference>
<dbReference type="GO" id="GO:0004789">
    <property type="term" value="F:thiamine-phosphate diphosphorylase activity"/>
    <property type="evidence" value="ECO:0000315"/>
    <property type="project" value="SGD"/>
</dbReference>
<dbReference type="GO" id="GO:0009228">
    <property type="term" value="P:thiamine biosynthetic process"/>
    <property type="evidence" value="ECO:0000315"/>
    <property type="project" value="SGD"/>
</dbReference>
<dbReference type="GO" id="GO:0009229">
    <property type="term" value="P:thiamine diphosphate biosynthetic process"/>
    <property type="evidence" value="ECO:0007669"/>
    <property type="project" value="UniProtKB-UniPathway"/>
</dbReference>
<dbReference type="CDD" id="cd01170">
    <property type="entry name" value="THZ_kinase"/>
    <property type="match status" value="1"/>
</dbReference>
<dbReference type="CDD" id="cd00564">
    <property type="entry name" value="TMP_TenI"/>
    <property type="match status" value="1"/>
</dbReference>
<dbReference type="FunFam" id="3.40.1190.20:FF:000055">
    <property type="entry name" value="Hydroxyethylthiazole kinase"/>
    <property type="match status" value="1"/>
</dbReference>
<dbReference type="FunFam" id="3.20.20.70:FF:000104">
    <property type="entry name" value="Thiamine biosynthetic bifunctional enzyme"/>
    <property type="match status" value="1"/>
</dbReference>
<dbReference type="Gene3D" id="3.40.1190.20">
    <property type="match status" value="1"/>
</dbReference>
<dbReference type="Gene3D" id="3.20.20.70">
    <property type="entry name" value="Aldolase class I"/>
    <property type="match status" value="1"/>
</dbReference>
<dbReference type="HAMAP" id="MF_00097">
    <property type="entry name" value="TMP_synthase"/>
    <property type="match status" value="1"/>
</dbReference>
<dbReference type="InterPro" id="IPR013785">
    <property type="entry name" value="Aldolase_TIM"/>
</dbReference>
<dbReference type="InterPro" id="IPR000417">
    <property type="entry name" value="Hyethyz_kinase"/>
</dbReference>
<dbReference type="InterPro" id="IPR029056">
    <property type="entry name" value="Ribokinase-like"/>
</dbReference>
<dbReference type="InterPro" id="IPR036206">
    <property type="entry name" value="ThiamineP_synth_sf"/>
</dbReference>
<dbReference type="InterPro" id="IPR022998">
    <property type="entry name" value="ThiamineP_synth_TenI"/>
</dbReference>
<dbReference type="InterPro" id="IPR034291">
    <property type="entry name" value="TMP_synthase"/>
</dbReference>
<dbReference type="NCBIfam" id="TIGR00693">
    <property type="entry name" value="thiE"/>
    <property type="match status" value="1"/>
</dbReference>
<dbReference type="NCBIfam" id="TIGR00694">
    <property type="entry name" value="thiM"/>
    <property type="match status" value="1"/>
</dbReference>
<dbReference type="PANTHER" id="PTHR20857:SF23">
    <property type="entry name" value="THIAMINE BIOSYNTHETIC BIFUNCTIONAL ENZYME"/>
    <property type="match status" value="1"/>
</dbReference>
<dbReference type="PANTHER" id="PTHR20857">
    <property type="entry name" value="THIAMINE-PHOSPHATE PYROPHOSPHORYLASE"/>
    <property type="match status" value="1"/>
</dbReference>
<dbReference type="Pfam" id="PF02110">
    <property type="entry name" value="HK"/>
    <property type="match status" value="1"/>
</dbReference>
<dbReference type="Pfam" id="PF02581">
    <property type="entry name" value="TMP-TENI"/>
    <property type="match status" value="1"/>
</dbReference>
<dbReference type="PRINTS" id="PR01099">
    <property type="entry name" value="HYETHTZKNASE"/>
</dbReference>
<dbReference type="SUPFAM" id="SSF53613">
    <property type="entry name" value="Ribokinase-like"/>
    <property type="match status" value="1"/>
</dbReference>
<dbReference type="SUPFAM" id="SSF51391">
    <property type="entry name" value="Thiamin phosphate synthase"/>
    <property type="match status" value="1"/>
</dbReference>
<comment type="function">
    <text>Essential for thiamine biosynthesis. The kinase activity is involved in the salvage synthesis of TH-P from the thiazole.</text>
</comment>
<comment type="function">
    <text evidence="1">Condenses 4-methyl-5-(beta-hydroxyethyl)thiazole monophosphate (THZ-P) and 2-methyl-4-amino-5-hydroxymethyl pyrimidine pyrophosphate (HMP-PP) to form thiamine monophosphate (TMP).</text>
</comment>
<comment type="catalytic activity">
    <reaction>
        <text>2-[(2R,5Z)-2-carboxy-4-methylthiazol-5(2H)-ylidene]ethyl phosphate + 4-amino-2-methyl-5-(diphosphooxymethyl)pyrimidine + 2 H(+) = thiamine phosphate + CO2 + diphosphate</text>
        <dbReference type="Rhea" id="RHEA:47844"/>
        <dbReference type="ChEBI" id="CHEBI:15378"/>
        <dbReference type="ChEBI" id="CHEBI:16526"/>
        <dbReference type="ChEBI" id="CHEBI:33019"/>
        <dbReference type="ChEBI" id="CHEBI:37575"/>
        <dbReference type="ChEBI" id="CHEBI:57841"/>
        <dbReference type="ChEBI" id="CHEBI:62899"/>
        <dbReference type="EC" id="2.5.1.3"/>
    </reaction>
</comment>
<comment type="catalytic activity">
    <reaction>
        <text>2-(2-carboxy-4-methylthiazol-5-yl)ethyl phosphate + 4-amino-2-methyl-5-(diphosphooxymethyl)pyrimidine + 2 H(+) = thiamine phosphate + CO2 + diphosphate</text>
        <dbReference type="Rhea" id="RHEA:47848"/>
        <dbReference type="ChEBI" id="CHEBI:15378"/>
        <dbReference type="ChEBI" id="CHEBI:16526"/>
        <dbReference type="ChEBI" id="CHEBI:33019"/>
        <dbReference type="ChEBI" id="CHEBI:37575"/>
        <dbReference type="ChEBI" id="CHEBI:57841"/>
        <dbReference type="ChEBI" id="CHEBI:62890"/>
        <dbReference type="EC" id="2.5.1.3"/>
    </reaction>
</comment>
<comment type="catalytic activity">
    <reaction>
        <text>4-methyl-5-(2-phosphooxyethyl)-thiazole + 4-amino-2-methyl-5-(diphosphooxymethyl)pyrimidine + H(+) = thiamine phosphate + diphosphate</text>
        <dbReference type="Rhea" id="RHEA:22328"/>
        <dbReference type="ChEBI" id="CHEBI:15378"/>
        <dbReference type="ChEBI" id="CHEBI:33019"/>
        <dbReference type="ChEBI" id="CHEBI:37575"/>
        <dbReference type="ChEBI" id="CHEBI:57841"/>
        <dbReference type="ChEBI" id="CHEBI:58296"/>
        <dbReference type="EC" id="2.5.1.3"/>
    </reaction>
</comment>
<comment type="catalytic activity">
    <reaction>
        <text>5-(2-hydroxyethyl)-4-methylthiazole + ATP = 4-methyl-5-(2-phosphooxyethyl)-thiazole + ADP + H(+)</text>
        <dbReference type="Rhea" id="RHEA:24212"/>
        <dbReference type="ChEBI" id="CHEBI:15378"/>
        <dbReference type="ChEBI" id="CHEBI:17957"/>
        <dbReference type="ChEBI" id="CHEBI:30616"/>
        <dbReference type="ChEBI" id="CHEBI:58296"/>
        <dbReference type="ChEBI" id="CHEBI:456216"/>
        <dbReference type="EC" id="2.7.1.50"/>
    </reaction>
</comment>
<comment type="cofactor">
    <cofactor evidence="1">
        <name>Mg(2+)</name>
        <dbReference type="ChEBI" id="CHEBI:18420"/>
    </cofactor>
    <text evidence="1">Binds 1 Mg(2+) ion per subunit.</text>
</comment>
<comment type="pathway">
    <text>Cofactor biosynthesis; thiamine diphosphate biosynthesis; 4-methyl-5-(2-phosphoethyl)-thiazole from 5-(2-hydroxyethyl)-4-methylthiazole: step 1/1.</text>
</comment>
<comment type="pathway">
    <text>Cofactor biosynthesis; thiamine diphosphate biosynthesis; thiamine phosphate from 4-amino-2-methyl-5-diphosphomethylpyrimidine and 4-methyl-5-(2-phosphoethyl)-thiazole: step 1/1.</text>
</comment>
<comment type="subunit">
    <text>Homooctamer.</text>
</comment>
<comment type="similarity">
    <text evidence="2">In the N-terminal section; belongs to the thiamine-phosphate synthase family.</text>
</comment>
<comment type="similarity">
    <text evidence="2">In the C-terminal section; belongs to the Thz kinase family.</text>
</comment>
<keyword id="KW-0067">ATP-binding</keyword>
<keyword id="KW-0418">Kinase</keyword>
<keyword id="KW-0460">Magnesium</keyword>
<keyword id="KW-0479">Metal-binding</keyword>
<keyword id="KW-0511">Multifunctional enzyme</keyword>
<keyword id="KW-0547">Nucleotide-binding</keyword>
<keyword id="KW-1185">Reference proteome</keyword>
<keyword id="KW-0784">Thiamine biosynthesis</keyword>
<keyword id="KW-0808">Transferase</keyword>